<accession>Q8XGM6</accession>
<accession>Q7ALU5</accession>
<gene>
    <name evidence="1" type="primary">rplW</name>
    <name type="ordered locus">STY4360</name>
    <name type="ordered locus">t4067</name>
</gene>
<reference key="1">
    <citation type="journal article" date="2003" name="J. Bacteriol.">
        <title>Comparative genomics of Salmonella enterica serovar Typhi strains Ty2 and CT18.</title>
        <authorList>
            <person name="Deng W."/>
            <person name="Liou S.-R."/>
            <person name="Plunkett G. III"/>
            <person name="Mayhew G.F."/>
            <person name="Rose D.J."/>
            <person name="Burland V."/>
            <person name="Kodoyianni V."/>
            <person name="Schwartz D.C."/>
            <person name="Blattner F.R."/>
        </authorList>
    </citation>
    <scope>NUCLEOTIDE SEQUENCE [LARGE SCALE GENOMIC DNA]</scope>
    <source>
        <strain>ATCC 700931 / Ty2</strain>
    </source>
</reference>
<reference key="2">
    <citation type="journal article" date="2001" name="Nature">
        <title>Complete genome sequence of a multiple drug resistant Salmonella enterica serovar Typhi CT18.</title>
        <authorList>
            <person name="Parkhill J."/>
            <person name="Dougan G."/>
            <person name="James K.D."/>
            <person name="Thomson N.R."/>
            <person name="Pickard D."/>
            <person name="Wain J."/>
            <person name="Churcher C.M."/>
            <person name="Mungall K.L."/>
            <person name="Bentley S.D."/>
            <person name="Holden M.T.G."/>
            <person name="Sebaihia M."/>
            <person name="Baker S."/>
            <person name="Basham D."/>
            <person name="Brooks K."/>
            <person name="Chillingworth T."/>
            <person name="Connerton P."/>
            <person name="Cronin A."/>
            <person name="Davis P."/>
            <person name="Davies R.M."/>
            <person name="Dowd L."/>
            <person name="White N."/>
            <person name="Farrar J."/>
            <person name="Feltwell T."/>
            <person name="Hamlin N."/>
            <person name="Haque A."/>
            <person name="Hien T.T."/>
            <person name="Holroyd S."/>
            <person name="Jagels K."/>
            <person name="Krogh A."/>
            <person name="Larsen T.S."/>
            <person name="Leather S."/>
            <person name="Moule S."/>
            <person name="O'Gaora P."/>
            <person name="Parry C."/>
            <person name="Quail M.A."/>
            <person name="Rutherford K.M."/>
            <person name="Simmonds M."/>
            <person name="Skelton J."/>
            <person name="Stevens K."/>
            <person name="Whitehead S."/>
            <person name="Barrell B.G."/>
        </authorList>
    </citation>
    <scope>NUCLEOTIDE SEQUENCE [LARGE SCALE GENOMIC DNA]</scope>
    <source>
        <strain>CT18</strain>
    </source>
</reference>
<organism>
    <name type="scientific">Salmonella typhi</name>
    <dbReference type="NCBI Taxonomy" id="90370"/>
    <lineage>
        <taxon>Bacteria</taxon>
        <taxon>Pseudomonadati</taxon>
        <taxon>Pseudomonadota</taxon>
        <taxon>Gammaproteobacteria</taxon>
        <taxon>Enterobacterales</taxon>
        <taxon>Enterobacteriaceae</taxon>
        <taxon>Salmonella</taxon>
    </lineage>
</organism>
<sequence length="100" mass="11213">MIREERLLKVLRAPHVSEKASTAMEKTNTIVLKVAKDATKAEIKAAVQKLFEVEVEVVNTLVVKGKVKRHGQRIGRRSDWKKAYVTLKEGQNLDFVGGAE</sequence>
<dbReference type="EMBL" id="AE014613">
    <property type="protein sequence ID" value="AAO71534.1"/>
    <property type="molecule type" value="Genomic_DNA"/>
</dbReference>
<dbReference type="EMBL" id="AL513382">
    <property type="protein sequence ID" value="CAD08175.1"/>
    <property type="molecule type" value="Genomic_DNA"/>
</dbReference>
<dbReference type="RefSeq" id="NP_458462.1">
    <property type="nucleotide sequence ID" value="NC_003198.1"/>
</dbReference>
<dbReference type="RefSeq" id="WP_000617546.1">
    <property type="nucleotide sequence ID" value="NZ_WSUR01000046.1"/>
</dbReference>
<dbReference type="SMR" id="Q8XGM6"/>
<dbReference type="STRING" id="220341.gene:17588188"/>
<dbReference type="GeneID" id="98390440"/>
<dbReference type="KEGG" id="stt:t4067"/>
<dbReference type="KEGG" id="sty:STY4360"/>
<dbReference type="PATRIC" id="fig|220341.7.peg.4456"/>
<dbReference type="eggNOG" id="COG0089">
    <property type="taxonomic scope" value="Bacteria"/>
</dbReference>
<dbReference type="HOGENOM" id="CLU_037562_3_1_6"/>
<dbReference type="OMA" id="DHRAAKP"/>
<dbReference type="OrthoDB" id="9793353at2"/>
<dbReference type="Proteomes" id="UP000000541">
    <property type="component" value="Chromosome"/>
</dbReference>
<dbReference type="Proteomes" id="UP000002670">
    <property type="component" value="Chromosome"/>
</dbReference>
<dbReference type="GO" id="GO:1990904">
    <property type="term" value="C:ribonucleoprotein complex"/>
    <property type="evidence" value="ECO:0007669"/>
    <property type="project" value="UniProtKB-KW"/>
</dbReference>
<dbReference type="GO" id="GO:0005840">
    <property type="term" value="C:ribosome"/>
    <property type="evidence" value="ECO:0007669"/>
    <property type="project" value="UniProtKB-KW"/>
</dbReference>
<dbReference type="GO" id="GO:0019843">
    <property type="term" value="F:rRNA binding"/>
    <property type="evidence" value="ECO:0007669"/>
    <property type="project" value="UniProtKB-UniRule"/>
</dbReference>
<dbReference type="GO" id="GO:0003735">
    <property type="term" value="F:structural constituent of ribosome"/>
    <property type="evidence" value="ECO:0007669"/>
    <property type="project" value="InterPro"/>
</dbReference>
<dbReference type="GO" id="GO:0006412">
    <property type="term" value="P:translation"/>
    <property type="evidence" value="ECO:0007669"/>
    <property type="project" value="UniProtKB-UniRule"/>
</dbReference>
<dbReference type="FunFam" id="3.30.70.330:FF:000001">
    <property type="entry name" value="50S ribosomal protein L23"/>
    <property type="match status" value="1"/>
</dbReference>
<dbReference type="Gene3D" id="3.30.70.330">
    <property type="match status" value="1"/>
</dbReference>
<dbReference type="HAMAP" id="MF_01369_B">
    <property type="entry name" value="Ribosomal_uL23_B"/>
    <property type="match status" value="1"/>
</dbReference>
<dbReference type="InterPro" id="IPR012677">
    <property type="entry name" value="Nucleotide-bd_a/b_plait_sf"/>
</dbReference>
<dbReference type="InterPro" id="IPR013025">
    <property type="entry name" value="Ribosomal_uL23-like"/>
</dbReference>
<dbReference type="InterPro" id="IPR012678">
    <property type="entry name" value="Ribosomal_uL23/eL15/eS24_sf"/>
</dbReference>
<dbReference type="InterPro" id="IPR001014">
    <property type="entry name" value="Ribosomal_uL23_CS"/>
</dbReference>
<dbReference type="NCBIfam" id="NF004358">
    <property type="entry name" value="PRK05738.1-1"/>
    <property type="match status" value="1"/>
</dbReference>
<dbReference type="NCBIfam" id="NF004359">
    <property type="entry name" value="PRK05738.1-3"/>
    <property type="match status" value="1"/>
</dbReference>
<dbReference type="NCBIfam" id="NF004363">
    <property type="entry name" value="PRK05738.2-4"/>
    <property type="match status" value="1"/>
</dbReference>
<dbReference type="PANTHER" id="PTHR11620">
    <property type="entry name" value="60S RIBOSOMAL PROTEIN L23A"/>
    <property type="match status" value="1"/>
</dbReference>
<dbReference type="Pfam" id="PF00276">
    <property type="entry name" value="Ribosomal_L23"/>
    <property type="match status" value="1"/>
</dbReference>
<dbReference type="SUPFAM" id="SSF54189">
    <property type="entry name" value="Ribosomal proteins S24e, L23 and L15e"/>
    <property type="match status" value="1"/>
</dbReference>
<dbReference type="PROSITE" id="PS00050">
    <property type="entry name" value="RIBOSOMAL_L23"/>
    <property type="match status" value="1"/>
</dbReference>
<evidence type="ECO:0000255" key="1">
    <source>
        <dbReference type="HAMAP-Rule" id="MF_01369"/>
    </source>
</evidence>
<evidence type="ECO:0000305" key="2"/>
<keyword id="KW-0687">Ribonucleoprotein</keyword>
<keyword id="KW-0689">Ribosomal protein</keyword>
<keyword id="KW-0694">RNA-binding</keyword>
<keyword id="KW-0699">rRNA-binding</keyword>
<name>RL23_SALTI</name>
<proteinExistence type="inferred from homology"/>
<comment type="function">
    <text evidence="1">One of the early assembly proteins it binds 23S rRNA. One of the proteins that surrounds the polypeptide exit tunnel on the outside of the ribosome. Forms the main docking site for trigger factor binding to the ribosome.</text>
</comment>
<comment type="subunit">
    <text evidence="1">Part of the 50S ribosomal subunit. Contacts protein L29, and trigger factor when it is bound to the ribosome.</text>
</comment>
<comment type="similarity">
    <text evidence="1">Belongs to the universal ribosomal protein uL23 family.</text>
</comment>
<feature type="chain" id="PRO_0000272837" description="Large ribosomal subunit protein uL23">
    <location>
        <begin position="1"/>
        <end position="100"/>
    </location>
</feature>
<protein>
    <recommendedName>
        <fullName evidence="1">Large ribosomal subunit protein uL23</fullName>
    </recommendedName>
    <alternativeName>
        <fullName evidence="2">50S ribosomal protein L23</fullName>
    </alternativeName>
</protein>